<accession>B7LAT0</accession>
<sequence>MSVSAFNRRWAAVILEALTRHGVRHICIAPGSRSTPLTLAAAENSTFIHHTHFDERGLGHLALGLAKVSKQPVAVIVTSGTAVANLYPALIEAGLTGEKLILLTADRPPELIDCGANQAIRQPGMFASHPTHSISLPRPTRDIPARWLVSTIDHALGTLHAGGVHINCPFAEPLYGEMDDTGLSWQQRLGDWWQDDKPWLREAPRLESEKQRDWFFWRQKRGVVVAGRMSAEEGKKVALWAQTLGWPLIGDVLSQTGQPLPCADLWLGNAKATSELQQAQIVVQLGSSLTGKRLLQWQASCEPEEYWIVDDIEGRLDPAHHRGRRLIANIADWLELHPAEKRQPWCVEIPRLAEQAMQAVIARRDAFGEAQLAHRICDYLPEQGQLFVGNSLVVRLIDALSQLPAGYPVYSNRGASGIDGLLSTAAGVQRASGKPTLAIVGDLSALYDLNALALLRQVSAPLVLIVVNNNGGQIFSLLPTPQSERERFYLMPQNVHFEHAAAMFELKYHRPQNWQELETAFADAWRTPTTTVIEMVVNDTDGAQTLQQLLAQVSHL</sequence>
<evidence type="ECO:0000255" key="1">
    <source>
        <dbReference type="HAMAP-Rule" id="MF_01659"/>
    </source>
</evidence>
<protein>
    <recommendedName>
        <fullName evidence="1">2-succinyl-5-enolpyruvyl-6-hydroxy-3-cyclohexene-1-carboxylate synthase</fullName>
        <shortName evidence="1">SEPHCHC synthase</shortName>
        <ecNumber evidence="1">2.2.1.9</ecNumber>
    </recommendedName>
    <alternativeName>
        <fullName evidence="1">Menaquinone biosynthesis protein MenD</fullName>
    </alternativeName>
</protein>
<reference key="1">
    <citation type="journal article" date="2009" name="PLoS Genet.">
        <title>Organised genome dynamics in the Escherichia coli species results in highly diverse adaptive paths.</title>
        <authorList>
            <person name="Touchon M."/>
            <person name="Hoede C."/>
            <person name="Tenaillon O."/>
            <person name="Barbe V."/>
            <person name="Baeriswyl S."/>
            <person name="Bidet P."/>
            <person name="Bingen E."/>
            <person name="Bonacorsi S."/>
            <person name="Bouchier C."/>
            <person name="Bouvet O."/>
            <person name="Calteau A."/>
            <person name="Chiapello H."/>
            <person name="Clermont O."/>
            <person name="Cruveiller S."/>
            <person name="Danchin A."/>
            <person name="Diard M."/>
            <person name="Dossat C."/>
            <person name="Karoui M.E."/>
            <person name="Frapy E."/>
            <person name="Garry L."/>
            <person name="Ghigo J.M."/>
            <person name="Gilles A.M."/>
            <person name="Johnson J."/>
            <person name="Le Bouguenec C."/>
            <person name="Lescat M."/>
            <person name="Mangenot S."/>
            <person name="Martinez-Jehanne V."/>
            <person name="Matic I."/>
            <person name="Nassif X."/>
            <person name="Oztas S."/>
            <person name="Petit M.A."/>
            <person name="Pichon C."/>
            <person name="Rouy Z."/>
            <person name="Ruf C.S."/>
            <person name="Schneider D."/>
            <person name="Tourret J."/>
            <person name="Vacherie B."/>
            <person name="Vallenet D."/>
            <person name="Medigue C."/>
            <person name="Rocha E.P.C."/>
            <person name="Denamur E."/>
        </authorList>
    </citation>
    <scope>NUCLEOTIDE SEQUENCE [LARGE SCALE GENOMIC DNA]</scope>
    <source>
        <strain>55989 / EAEC</strain>
    </source>
</reference>
<dbReference type="EC" id="2.2.1.9" evidence="1"/>
<dbReference type="EMBL" id="CU928145">
    <property type="protein sequence ID" value="CAU98380.1"/>
    <property type="molecule type" value="Genomic_DNA"/>
</dbReference>
<dbReference type="RefSeq" id="WP_001297082.1">
    <property type="nucleotide sequence ID" value="NC_011748.1"/>
</dbReference>
<dbReference type="SMR" id="B7LAT0"/>
<dbReference type="KEGG" id="eck:EC55989_2512"/>
<dbReference type="HOGENOM" id="CLU_006051_3_0_6"/>
<dbReference type="UniPathway" id="UPA00079"/>
<dbReference type="UniPathway" id="UPA01057">
    <property type="reaction ID" value="UER00164"/>
</dbReference>
<dbReference type="Proteomes" id="UP000000746">
    <property type="component" value="Chromosome"/>
</dbReference>
<dbReference type="GO" id="GO:0070204">
    <property type="term" value="F:2-succinyl-5-enolpyruvyl-6-hydroxy-3-cyclohexene-1-carboxylic-acid synthase activity"/>
    <property type="evidence" value="ECO:0007669"/>
    <property type="project" value="UniProtKB-UniRule"/>
</dbReference>
<dbReference type="GO" id="GO:0000287">
    <property type="term" value="F:magnesium ion binding"/>
    <property type="evidence" value="ECO:0007669"/>
    <property type="project" value="UniProtKB-UniRule"/>
</dbReference>
<dbReference type="GO" id="GO:0030145">
    <property type="term" value="F:manganese ion binding"/>
    <property type="evidence" value="ECO:0007669"/>
    <property type="project" value="UniProtKB-UniRule"/>
</dbReference>
<dbReference type="GO" id="GO:0030976">
    <property type="term" value="F:thiamine pyrophosphate binding"/>
    <property type="evidence" value="ECO:0007669"/>
    <property type="project" value="UniProtKB-UniRule"/>
</dbReference>
<dbReference type="GO" id="GO:0009234">
    <property type="term" value="P:menaquinone biosynthetic process"/>
    <property type="evidence" value="ECO:0007669"/>
    <property type="project" value="UniProtKB-UniRule"/>
</dbReference>
<dbReference type="CDD" id="cd07037">
    <property type="entry name" value="TPP_PYR_MenD"/>
    <property type="match status" value="1"/>
</dbReference>
<dbReference type="CDD" id="cd02009">
    <property type="entry name" value="TPP_SHCHC_synthase"/>
    <property type="match status" value="1"/>
</dbReference>
<dbReference type="FunFam" id="3.40.50.1220:FF:000010">
    <property type="entry name" value="2-succinyl-5-enolpyruvyl-6-hydroxy-3-cyclohexene-1-carboxylate synthase"/>
    <property type="match status" value="1"/>
</dbReference>
<dbReference type="FunFam" id="3.40.50.970:FF:000029">
    <property type="entry name" value="2-succinyl-5-enolpyruvyl-6-hydroxy-3-cyclohexene-1-carboxylate synthase"/>
    <property type="match status" value="1"/>
</dbReference>
<dbReference type="FunFam" id="3.40.50.970:FF:000035">
    <property type="entry name" value="2-succinyl-5-enolpyruvyl-6-hydroxy-3-cyclohexene-1-carboxylate synthase"/>
    <property type="match status" value="1"/>
</dbReference>
<dbReference type="Gene3D" id="3.40.50.970">
    <property type="match status" value="2"/>
</dbReference>
<dbReference type="Gene3D" id="3.40.50.1220">
    <property type="entry name" value="TPP-binding domain"/>
    <property type="match status" value="1"/>
</dbReference>
<dbReference type="HAMAP" id="MF_01659">
    <property type="entry name" value="MenD"/>
    <property type="match status" value="1"/>
</dbReference>
<dbReference type="InterPro" id="IPR004433">
    <property type="entry name" value="MenaQ_synth_MenD"/>
</dbReference>
<dbReference type="InterPro" id="IPR032264">
    <property type="entry name" value="MenD_middle"/>
</dbReference>
<dbReference type="InterPro" id="IPR029061">
    <property type="entry name" value="THDP-binding"/>
</dbReference>
<dbReference type="InterPro" id="IPR012001">
    <property type="entry name" value="Thiamin_PyroP_enz_TPP-bd_dom"/>
</dbReference>
<dbReference type="InterPro" id="IPR011766">
    <property type="entry name" value="TPP_enzyme_TPP-bd"/>
</dbReference>
<dbReference type="NCBIfam" id="TIGR00173">
    <property type="entry name" value="menD"/>
    <property type="match status" value="1"/>
</dbReference>
<dbReference type="PANTHER" id="PTHR42916">
    <property type="entry name" value="2-SUCCINYL-5-ENOLPYRUVYL-6-HYDROXY-3-CYCLOHEXENE-1-CARBOXYLATE SYNTHASE"/>
    <property type="match status" value="1"/>
</dbReference>
<dbReference type="PANTHER" id="PTHR42916:SF1">
    <property type="entry name" value="PROTEIN PHYLLO, CHLOROPLASTIC"/>
    <property type="match status" value="1"/>
</dbReference>
<dbReference type="Pfam" id="PF02775">
    <property type="entry name" value="TPP_enzyme_C"/>
    <property type="match status" value="1"/>
</dbReference>
<dbReference type="Pfam" id="PF16582">
    <property type="entry name" value="TPP_enzyme_M_2"/>
    <property type="match status" value="1"/>
</dbReference>
<dbReference type="Pfam" id="PF02776">
    <property type="entry name" value="TPP_enzyme_N"/>
    <property type="match status" value="1"/>
</dbReference>
<dbReference type="PIRSF" id="PIRSF004983">
    <property type="entry name" value="MenD"/>
    <property type="match status" value="1"/>
</dbReference>
<dbReference type="SUPFAM" id="SSF52518">
    <property type="entry name" value="Thiamin diphosphate-binding fold (THDP-binding)"/>
    <property type="match status" value="2"/>
</dbReference>
<feature type="chain" id="PRO_1000187069" description="2-succinyl-5-enolpyruvyl-6-hydroxy-3-cyclohexene-1-carboxylate synthase">
    <location>
        <begin position="1"/>
        <end position="556"/>
    </location>
</feature>
<proteinExistence type="inferred from homology"/>
<gene>
    <name evidence="1" type="primary">menD</name>
    <name type="ordered locus">EC55989_2512</name>
</gene>
<comment type="function">
    <text evidence="1">Catalyzes the thiamine diphosphate-dependent decarboxylation of 2-oxoglutarate and the subsequent addition of the resulting succinic semialdehyde-thiamine pyrophosphate anion to isochorismate to yield 2-succinyl-5-enolpyruvyl-6-hydroxy-3-cyclohexene-1-carboxylate (SEPHCHC).</text>
</comment>
<comment type="catalytic activity">
    <reaction evidence="1">
        <text>isochorismate + 2-oxoglutarate + H(+) = 5-enolpyruvoyl-6-hydroxy-2-succinyl-cyclohex-3-ene-1-carboxylate + CO2</text>
        <dbReference type="Rhea" id="RHEA:25593"/>
        <dbReference type="ChEBI" id="CHEBI:15378"/>
        <dbReference type="ChEBI" id="CHEBI:16526"/>
        <dbReference type="ChEBI" id="CHEBI:16810"/>
        <dbReference type="ChEBI" id="CHEBI:29780"/>
        <dbReference type="ChEBI" id="CHEBI:58818"/>
        <dbReference type="EC" id="2.2.1.9"/>
    </reaction>
</comment>
<comment type="cofactor">
    <cofactor evidence="1">
        <name>Mg(2+)</name>
        <dbReference type="ChEBI" id="CHEBI:18420"/>
    </cofactor>
    <cofactor evidence="1">
        <name>Mn(2+)</name>
        <dbReference type="ChEBI" id="CHEBI:29035"/>
    </cofactor>
</comment>
<comment type="cofactor">
    <cofactor evidence="1">
        <name>thiamine diphosphate</name>
        <dbReference type="ChEBI" id="CHEBI:58937"/>
    </cofactor>
    <text evidence="1">Binds 1 thiamine pyrophosphate per subunit.</text>
</comment>
<comment type="pathway">
    <text evidence="1">Quinol/quinone metabolism; 1,4-dihydroxy-2-naphthoate biosynthesis; 1,4-dihydroxy-2-naphthoate from chorismate: step 2/7.</text>
</comment>
<comment type="pathway">
    <text evidence="1">Quinol/quinone metabolism; menaquinone biosynthesis.</text>
</comment>
<comment type="subunit">
    <text evidence="1">Homodimer.</text>
</comment>
<comment type="similarity">
    <text evidence="1">Belongs to the TPP enzyme family. MenD subfamily.</text>
</comment>
<name>MEND_ECO55</name>
<organism>
    <name type="scientific">Escherichia coli (strain 55989 / EAEC)</name>
    <dbReference type="NCBI Taxonomy" id="585055"/>
    <lineage>
        <taxon>Bacteria</taxon>
        <taxon>Pseudomonadati</taxon>
        <taxon>Pseudomonadota</taxon>
        <taxon>Gammaproteobacteria</taxon>
        <taxon>Enterobacterales</taxon>
        <taxon>Enterobacteriaceae</taxon>
        <taxon>Escherichia</taxon>
    </lineage>
</organism>
<keyword id="KW-0460">Magnesium</keyword>
<keyword id="KW-0464">Manganese</keyword>
<keyword id="KW-0474">Menaquinone biosynthesis</keyword>
<keyword id="KW-0479">Metal-binding</keyword>
<keyword id="KW-1185">Reference proteome</keyword>
<keyword id="KW-0786">Thiamine pyrophosphate</keyword>
<keyword id="KW-0808">Transferase</keyword>